<dbReference type="EC" id="7.1.2.2" evidence="1"/>
<dbReference type="EMBL" id="X00408">
    <property type="protein sequence ID" value="CAA25114.1"/>
    <property type="molecule type" value="Genomic_DNA"/>
</dbReference>
<dbReference type="EMBL" id="EF115541">
    <property type="protein sequence ID" value="ABK79420.1"/>
    <property type="molecule type" value="Genomic_DNA"/>
</dbReference>
<dbReference type="EMBL" id="X00630">
    <property type="protein sequence ID" value="CAA25264.1"/>
    <property type="molecule type" value="Genomic_DNA"/>
</dbReference>
<dbReference type="PIR" id="A01026">
    <property type="entry name" value="PWBHB"/>
</dbReference>
<dbReference type="RefSeq" id="YP_010144432.1">
    <property type="nucleotide sequence ID" value="NC_056985.1"/>
</dbReference>
<dbReference type="RefSeq" id="YP_874660.1">
    <property type="nucleotide sequence ID" value="NC_008590.1"/>
</dbReference>
<dbReference type="SMR" id="P00828"/>
<dbReference type="GeneID" id="4525186"/>
<dbReference type="GeneID" id="67140619"/>
<dbReference type="GO" id="GO:0009535">
    <property type="term" value="C:chloroplast thylakoid membrane"/>
    <property type="evidence" value="ECO:0007669"/>
    <property type="project" value="UniProtKB-SubCell"/>
</dbReference>
<dbReference type="GO" id="GO:0005739">
    <property type="term" value="C:mitochondrion"/>
    <property type="evidence" value="ECO:0007669"/>
    <property type="project" value="GOC"/>
</dbReference>
<dbReference type="GO" id="GO:0045259">
    <property type="term" value="C:proton-transporting ATP synthase complex"/>
    <property type="evidence" value="ECO:0007669"/>
    <property type="project" value="UniProtKB-KW"/>
</dbReference>
<dbReference type="GO" id="GO:0005524">
    <property type="term" value="F:ATP binding"/>
    <property type="evidence" value="ECO:0007669"/>
    <property type="project" value="UniProtKB-UniRule"/>
</dbReference>
<dbReference type="GO" id="GO:0016887">
    <property type="term" value="F:ATP hydrolysis activity"/>
    <property type="evidence" value="ECO:0007669"/>
    <property type="project" value="InterPro"/>
</dbReference>
<dbReference type="GO" id="GO:0046933">
    <property type="term" value="F:proton-transporting ATP synthase activity, rotational mechanism"/>
    <property type="evidence" value="ECO:0007669"/>
    <property type="project" value="UniProtKB-UniRule"/>
</dbReference>
<dbReference type="GO" id="GO:0042776">
    <property type="term" value="P:proton motive force-driven mitochondrial ATP synthesis"/>
    <property type="evidence" value="ECO:0007669"/>
    <property type="project" value="TreeGrafter"/>
</dbReference>
<dbReference type="CDD" id="cd18110">
    <property type="entry name" value="ATP-synt_F1_beta_C"/>
    <property type="match status" value="1"/>
</dbReference>
<dbReference type="CDD" id="cd18115">
    <property type="entry name" value="ATP-synt_F1_beta_N"/>
    <property type="match status" value="1"/>
</dbReference>
<dbReference type="CDD" id="cd01133">
    <property type="entry name" value="F1-ATPase_beta_CD"/>
    <property type="match status" value="1"/>
</dbReference>
<dbReference type="FunFam" id="1.10.1140.10:FF:000001">
    <property type="entry name" value="ATP synthase subunit beta"/>
    <property type="match status" value="1"/>
</dbReference>
<dbReference type="FunFam" id="3.40.50.12240:FF:000006">
    <property type="entry name" value="ATP synthase subunit beta"/>
    <property type="match status" value="1"/>
</dbReference>
<dbReference type="FunFam" id="3.40.50.300:FF:000026">
    <property type="entry name" value="ATP synthase subunit beta"/>
    <property type="match status" value="1"/>
</dbReference>
<dbReference type="FunFam" id="2.40.10.170:FF:000002">
    <property type="entry name" value="ATP synthase subunit beta, chloroplastic"/>
    <property type="match status" value="1"/>
</dbReference>
<dbReference type="Gene3D" id="2.40.10.170">
    <property type="match status" value="1"/>
</dbReference>
<dbReference type="Gene3D" id="1.10.1140.10">
    <property type="entry name" value="Bovine Mitochondrial F1-atpase, Atp Synthase Beta Chain, Chain D, domain 3"/>
    <property type="match status" value="1"/>
</dbReference>
<dbReference type="Gene3D" id="3.40.50.300">
    <property type="entry name" value="P-loop containing nucleotide triphosphate hydrolases"/>
    <property type="match status" value="1"/>
</dbReference>
<dbReference type="HAMAP" id="MF_01347">
    <property type="entry name" value="ATP_synth_beta_bact"/>
    <property type="match status" value="1"/>
</dbReference>
<dbReference type="InterPro" id="IPR003593">
    <property type="entry name" value="AAA+_ATPase"/>
</dbReference>
<dbReference type="InterPro" id="IPR055190">
    <property type="entry name" value="ATP-synt_VA_C"/>
</dbReference>
<dbReference type="InterPro" id="IPR005722">
    <property type="entry name" value="ATP_synth_F1_bsu"/>
</dbReference>
<dbReference type="InterPro" id="IPR020003">
    <property type="entry name" value="ATPase_a/bsu_AS"/>
</dbReference>
<dbReference type="InterPro" id="IPR050053">
    <property type="entry name" value="ATPase_alpha/beta_chains"/>
</dbReference>
<dbReference type="InterPro" id="IPR004100">
    <property type="entry name" value="ATPase_F1/V1/A1_a/bsu_N"/>
</dbReference>
<dbReference type="InterPro" id="IPR036121">
    <property type="entry name" value="ATPase_F1/V1/A1_a/bsu_N_sf"/>
</dbReference>
<dbReference type="InterPro" id="IPR000194">
    <property type="entry name" value="ATPase_F1/V1/A1_a/bsu_nucl-bd"/>
</dbReference>
<dbReference type="InterPro" id="IPR024034">
    <property type="entry name" value="ATPase_F1/V1_b/a_C"/>
</dbReference>
<dbReference type="InterPro" id="IPR027417">
    <property type="entry name" value="P-loop_NTPase"/>
</dbReference>
<dbReference type="NCBIfam" id="TIGR01039">
    <property type="entry name" value="atpD"/>
    <property type="match status" value="1"/>
</dbReference>
<dbReference type="PANTHER" id="PTHR15184">
    <property type="entry name" value="ATP SYNTHASE"/>
    <property type="match status" value="1"/>
</dbReference>
<dbReference type="PANTHER" id="PTHR15184:SF71">
    <property type="entry name" value="ATP SYNTHASE SUBUNIT BETA, MITOCHONDRIAL"/>
    <property type="match status" value="1"/>
</dbReference>
<dbReference type="Pfam" id="PF00006">
    <property type="entry name" value="ATP-synt_ab"/>
    <property type="match status" value="1"/>
</dbReference>
<dbReference type="Pfam" id="PF02874">
    <property type="entry name" value="ATP-synt_ab_N"/>
    <property type="match status" value="1"/>
</dbReference>
<dbReference type="Pfam" id="PF22919">
    <property type="entry name" value="ATP-synt_VA_C"/>
    <property type="match status" value="1"/>
</dbReference>
<dbReference type="SMART" id="SM00382">
    <property type="entry name" value="AAA"/>
    <property type="match status" value="1"/>
</dbReference>
<dbReference type="SUPFAM" id="SSF47917">
    <property type="entry name" value="C-terminal domain of alpha and beta subunits of F1 ATP synthase"/>
    <property type="match status" value="1"/>
</dbReference>
<dbReference type="SUPFAM" id="SSF50615">
    <property type="entry name" value="N-terminal domain of alpha and beta subunits of F1 ATP synthase"/>
    <property type="match status" value="1"/>
</dbReference>
<dbReference type="SUPFAM" id="SSF52540">
    <property type="entry name" value="P-loop containing nucleoside triphosphate hydrolases"/>
    <property type="match status" value="1"/>
</dbReference>
<dbReference type="PROSITE" id="PS00152">
    <property type="entry name" value="ATPASE_ALPHA_BETA"/>
    <property type="match status" value="1"/>
</dbReference>
<comment type="function">
    <text evidence="1">Produces ATP from ADP in the presence of a proton gradient across the membrane. The catalytic sites are hosted primarily by the beta subunits.</text>
</comment>
<comment type="catalytic activity">
    <reaction evidence="1">
        <text>ATP + H2O + 4 H(+)(in) = ADP + phosphate + 5 H(+)(out)</text>
        <dbReference type="Rhea" id="RHEA:57720"/>
        <dbReference type="ChEBI" id="CHEBI:15377"/>
        <dbReference type="ChEBI" id="CHEBI:15378"/>
        <dbReference type="ChEBI" id="CHEBI:30616"/>
        <dbReference type="ChEBI" id="CHEBI:43474"/>
        <dbReference type="ChEBI" id="CHEBI:456216"/>
        <dbReference type="EC" id="7.1.2.2"/>
    </reaction>
</comment>
<comment type="subunit">
    <text evidence="1">F-type ATPases have 2 components, CF(1) - the catalytic core - and CF(0) - the membrane proton channel. CF(1) has five subunits: alpha(3), beta(3), gamma(1), delta(1), epsilon(1). CF(0) has four main subunits: a(1), b(1), b'(1) and c(9-12).</text>
</comment>
<comment type="subcellular location">
    <subcellularLocation>
        <location evidence="1">Plastid</location>
        <location evidence="1">Chloroplast thylakoid membrane</location>
        <topology evidence="1">Peripheral membrane protein</topology>
    </subcellularLocation>
</comment>
<comment type="similarity">
    <text evidence="1">Belongs to the ATPase alpha/beta chains family.</text>
</comment>
<name>ATPB_HORVU</name>
<accession>P00828</accession>
<accession>A1E9J8</accession>
<protein>
    <recommendedName>
        <fullName evidence="1">ATP synthase subunit beta, chloroplastic</fullName>
        <ecNumber evidence="1">7.1.2.2</ecNumber>
    </recommendedName>
    <alternativeName>
        <fullName evidence="1">ATP synthase F1 sector subunit beta</fullName>
    </alternativeName>
    <alternativeName>
        <fullName evidence="1">F-ATPase subunit beta</fullName>
    </alternativeName>
</protein>
<proteinExistence type="inferred from homology"/>
<feature type="chain" id="PRO_0000144516" description="ATP synthase subunit beta, chloroplastic">
    <location>
        <begin position="1"/>
        <end position="498"/>
    </location>
</feature>
<feature type="region of interest" description="Disordered" evidence="2">
    <location>
        <begin position="1"/>
        <end position="20"/>
    </location>
</feature>
<feature type="compositionally biased region" description="Polar residues" evidence="2">
    <location>
        <begin position="1"/>
        <end position="14"/>
    </location>
</feature>
<feature type="binding site" evidence="1">
    <location>
        <begin position="172"/>
        <end position="179"/>
    </location>
    <ligand>
        <name>ATP</name>
        <dbReference type="ChEBI" id="CHEBI:30616"/>
    </ligand>
</feature>
<feature type="sequence conflict" description="In Ref. 1; CAA25114." evidence="3" ref="1">
    <original>N</original>
    <variation>D</variation>
    <location>
        <position position="274"/>
    </location>
</feature>
<geneLocation type="chloroplast"/>
<reference key="1">
    <citation type="journal article" date="1984" name="Nucleic Acids Res.">
        <title>The barley chloroplast DNA atpBE, trnM2, and trnV1 loci.</title>
        <authorList>
            <person name="Zurawski G."/>
            <person name="Clegg M.T."/>
        </authorList>
    </citation>
    <scope>NUCLEOTIDE SEQUENCE [GENOMIC DNA]</scope>
</reference>
<reference key="2">
    <citation type="journal article" date="2007" name="Theor. Appl. Genet.">
        <title>Complete chloroplast genome sequences of Hordeum vulgare, Sorghum bicolor and Agrostis stolonifera, and comparative analyses with other grass genomes.</title>
        <authorList>
            <person name="Saski C."/>
            <person name="Lee S.-B."/>
            <person name="Fjellheim S."/>
            <person name="Guda C."/>
            <person name="Jansen R.K."/>
            <person name="Luo H."/>
            <person name="Tomkins J."/>
            <person name="Rognli O.A."/>
            <person name="Daniell H."/>
            <person name="Clarke J.L."/>
        </authorList>
    </citation>
    <scope>NUCLEOTIDE SEQUENCE [LARGE SCALE GENOMIC DNA]</scope>
    <source>
        <strain>cv. Morex</strain>
    </source>
</reference>
<reference key="3">
    <citation type="journal article" date="1984" name="Genetics">
        <title>The nature of nucleotide sequence divergence between barley and maize chloroplast DNA.</title>
        <authorList>
            <person name="Zurawski G."/>
            <person name="Clegg M.T."/>
            <person name="Brown A.H.D."/>
        </authorList>
    </citation>
    <scope>NUCLEOTIDE SEQUENCE [GENOMIC DNA] OF 1-37</scope>
</reference>
<evidence type="ECO:0000255" key="1">
    <source>
        <dbReference type="HAMAP-Rule" id="MF_01347"/>
    </source>
</evidence>
<evidence type="ECO:0000256" key="2">
    <source>
        <dbReference type="SAM" id="MobiDB-lite"/>
    </source>
</evidence>
<evidence type="ECO:0000305" key="3"/>
<organism>
    <name type="scientific">Hordeum vulgare</name>
    <name type="common">Barley</name>
    <dbReference type="NCBI Taxonomy" id="4513"/>
    <lineage>
        <taxon>Eukaryota</taxon>
        <taxon>Viridiplantae</taxon>
        <taxon>Streptophyta</taxon>
        <taxon>Embryophyta</taxon>
        <taxon>Tracheophyta</taxon>
        <taxon>Spermatophyta</taxon>
        <taxon>Magnoliopsida</taxon>
        <taxon>Liliopsida</taxon>
        <taxon>Poales</taxon>
        <taxon>Poaceae</taxon>
        <taxon>BOP clade</taxon>
        <taxon>Pooideae</taxon>
        <taxon>Triticodae</taxon>
        <taxon>Triticeae</taxon>
        <taxon>Hordeinae</taxon>
        <taxon>Hordeum</taxon>
    </lineage>
</organism>
<sequence length="498" mass="53875">MRTNPTTSRPGVSTSEEKSTGRIDQIIGPVLDVTFPPGKLPYIYNALVVQSRDTADKQINVTCEVQQLLGNNRVRAVAMSATDGLMRGMEVIDTGAPLSVPVGGATLGRIFNVLGEPVDNLGPVDSSATFPIHRSAPAFIELDTKLSIFETGIKVVDLLAPYRRGGKIGLFGGAGVGKTVLIMELINNIAKAHGGVSVFGGVGERTREGNDLYMEMKESGVINEKNIEESKVALVYGQMNEPPGARMRVGLTALTMAEYFRDVNKQDVLLFIDNIFRFVQAGSEVSALLGRMPSAVGYQPTLSTEMGSLQERIASTKKGSITSIQAVYVPADDLTDPAPATTFAHLDATTVLSRGLASKGIYPAVDPLDSTSTMLQPRIVGNEHYETAQRVKETLQRYKELQDIIAILGLDELSEEDRLTVARARKIERFLSQPFFVAEVFTGSPGKYVALAETIRGFQLILSGELDGLPEQAFYLVGNIDEASTKAITLEEENKSQK</sequence>
<gene>
    <name evidence="1" type="primary">atpB</name>
</gene>
<keyword id="KW-0066">ATP synthesis</keyword>
<keyword id="KW-0067">ATP-binding</keyword>
<keyword id="KW-0139">CF(1)</keyword>
<keyword id="KW-0150">Chloroplast</keyword>
<keyword id="KW-0375">Hydrogen ion transport</keyword>
<keyword id="KW-0406">Ion transport</keyword>
<keyword id="KW-0472">Membrane</keyword>
<keyword id="KW-0547">Nucleotide-binding</keyword>
<keyword id="KW-0934">Plastid</keyword>
<keyword id="KW-0793">Thylakoid</keyword>
<keyword id="KW-1278">Translocase</keyword>
<keyword id="KW-0813">Transport</keyword>